<evidence type="ECO:0000255" key="1"/>
<evidence type="ECO:0000305" key="2"/>
<evidence type="ECO:0007829" key="3">
    <source>
        <dbReference type="PDB" id="3DT5"/>
    </source>
</evidence>
<name>Y924_ARCFU</name>
<protein>
    <recommendedName>
        <fullName>Uncharacterized protein AF_0924</fullName>
    </recommendedName>
</protein>
<sequence length="195" mass="22463">MKNVKFIKKSESVIGLWLPILVILILFAFLVAESVIMKDIILSNSVVALATAIMASAALVTILVSNRQVQLMARQQRLKAIEDRLEKFYIPLIKAFSSYVYTAQTEDEIETIITCRRYLAGNNLLRVLPMHFKFKADKIAGSANWTFYAKEDFEQWKEALDVLWEEFLEVLKEYYTLSGTEISLPEKPDWLIGYK</sequence>
<feature type="chain" id="PRO_0000127946" description="Uncharacterized protein AF_0924">
    <location>
        <begin position="1"/>
        <end position="195"/>
    </location>
</feature>
<feature type="transmembrane region" description="Helical" evidence="1">
    <location>
        <begin position="13"/>
        <end position="32"/>
    </location>
</feature>
<feature type="transmembrane region" description="Helical" evidence="1">
    <location>
        <begin position="42"/>
        <end position="64"/>
    </location>
</feature>
<feature type="helix" evidence="3">
    <location>
        <begin position="78"/>
        <end position="87"/>
    </location>
</feature>
<feature type="helix" evidence="3">
    <location>
        <begin position="89"/>
        <end position="97"/>
    </location>
</feature>
<feature type="helix" evidence="3">
    <location>
        <begin position="105"/>
        <end position="113"/>
    </location>
</feature>
<feature type="turn" evidence="3">
    <location>
        <begin position="114"/>
        <end position="116"/>
    </location>
</feature>
<feature type="helix" evidence="3">
    <location>
        <begin position="117"/>
        <end position="119"/>
    </location>
</feature>
<feature type="helix" evidence="3">
    <location>
        <begin position="122"/>
        <end position="127"/>
    </location>
</feature>
<feature type="helix" evidence="3">
    <location>
        <begin position="133"/>
        <end position="135"/>
    </location>
</feature>
<feature type="strand" evidence="3">
    <location>
        <begin position="143"/>
        <end position="149"/>
    </location>
</feature>
<feature type="helix" evidence="3">
    <location>
        <begin position="150"/>
        <end position="178"/>
    </location>
</feature>
<keyword id="KW-0002">3D-structure</keyword>
<keyword id="KW-1003">Cell membrane</keyword>
<keyword id="KW-0472">Membrane</keyword>
<keyword id="KW-1185">Reference proteome</keyword>
<keyword id="KW-0812">Transmembrane</keyword>
<keyword id="KW-1133">Transmembrane helix</keyword>
<reference key="1">
    <citation type="journal article" date="1997" name="Nature">
        <title>The complete genome sequence of the hyperthermophilic, sulphate-reducing archaeon Archaeoglobus fulgidus.</title>
        <authorList>
            <person name="Klenk H.-P."/>
            <person name="Clayton R.A."/>
            <person name="Tomb J.-F."/>
            <person name="White O."/>
            <person name="Nelson K.E."/>
            <person name="Ketchum K.A."/>
            <person name="Dodson R.J."/>
            <person name="Gwinn M.L."/>
            <person name="Hickey E.K."/>
            <person name="Peterson J.D."/>
            <person name="Richardson D.L."/>
            <person name="Kerlavage A.R."/>
            <person name="Graham D.E."/>
            <person name="Kyrpides N.C."/>
            <person name="Fleischmann R.D."/>
            <person name="Quackenbush J."/>
            <person name="Lee N.H."/>
            <person name="Sutton G.G."/>
            <person name="Gill S.R."/>
            <person name="Kirkness E.F."/>
            <person name="Dougherty B.A."/>
            <person name="McKenney K."/>
            <person name="Adams M.D."/>
            <person name="Loftus B.J."/>
            <person name="Peterson S.N."/>
            <person name="Reich C.I."/>
            <person name="McNeil L.K."/>
            <person name="Badger J.H."/>
            <person name="Glodek A."/>
            <person name="Zhou L."/>
            <person name="Overbeek R."/>
            <person name="Gocayne J.D."/>
            <person name="Weidman J.F."/>
            <person name="McDonald L.A."/>
            <person name="Utterback T.R."/>
            <person name="Cotton M.D."/>
            <person name="Spriggs T."/>
            <person name="Artiach P."/>
            <person name="Kaine B.P."/>
            <person name="Sykes S.M."/>
            <person name="Sadow P.W."/>
            <person name="D'Andrea K.P."/>
            <person name="Bowman C."/>
            <person name="Fujii C."/>
            <person name="Garland S.A."/>
            <person name="Mason T.M."/>
            <person name="Olsen G.J."/>
            <person name="Fraser C.M."/>
            <person name="Smith H.O."/>
            <person name="Woese C.R."/>
            <person name="Venter J.C."/>
        </authorList>
    </citation>
    <scope>NUCLEOTIDE SEQUENCE [LARGE SCALE GENOMIC DNA]</scope>
    <source>
        <strain>ATCC 49558 / DSM 4304 / JCM 9628 / NBRC 100126 / VC-16</strain>
    </source>
</reference>
<gene>
    <name type="ordered locus">AF_0924</name>
</gene>
<organism>
    <name type="scientific">Archaeoglobus fulgidus (strain ATCC 49558 / DSM 4304 / JCM 9628 / NBRC 100126 / VC-16)</name>
    <dbReference type="NCBI Taxonomy" id="224325"/>
    <lineage>
        <taxon>Archaea</taxon>
        <taxon>Methanobacteriati</taxon>
        <taxon>Methanobacteriota</taxon>
        <taxon>Archaeoglobi</taxon>
        <taxon>Archaeoglobales</taxon>
        <taxon>Archaeoglobaceae</taxon>
        <taxon>Archaeoglobus</taxon>
    </lineage>
</organism>
<comment type="subcellular location">
    <subcellularLocation>
        <location evidence="2">Cell membrane</location>
        <topology evidence="2">Multi-pass membrane protein</topology>
    </subcellularLocation>
</comment>
<dbReference type="EMBL" id="AE000782">
    <property type="protein sequence ID" value="AAB90326.1"/>
    <property type="molecule type" value="Genomic_DNA"/>
</dbReference>
<dbReference type="PIR" id="D69365">
    <property type="entry name" value="D69365"/>
</dbReference>
<dbReference type="PDB" id="3DT5">
    <property type="method" value="X-ray"/>
    <property type="resolution" value="1.94 A"/>
    <property type="chains" value="A=65-195"/>
</dbReference>
<dbReference type="PDBsum" id="3DT5"/>
<dbReference type="SMR" id="O29338"/>
<dbReference type="STRING" id="224325.AF_0924"/>
<dbReference type="PaxDb" id="224325-AF_0924"/>
<dbReference type="EnsemblBacteria" id="AAB90326">
    <property type="protein sequence ID" value="AAB90326"/>
    <property type="gene ID" value="AF_0924"/>
</dbReference>
<dbReference type="KEGG" id="afu:AF_0924"/>
<dbReference type="HOGENOM" id="CLU_1393516_0_0_2"/>
<dbReference type="Proteomes" id="UP000002199">
    <property type="component" value="Chromosome"/>
</dbReference>
<dbReference type="GO" id="GO:0005886">
    <property type="term" value="C:plasma membrane"/>
    <property type="evidence" value="ECO:0007669"/>
    <property type="project" value="UniProtKB-SubCell"/>
</dbReference>
<dbReference type="Gene3D" id="1.10.3940.10">
    <property type="entry name" value="AF_0924 domain"/>
    <property type="match status" value="1"/>
</dbReference>
<dbReference type="InterPro" id="IPR054025">
    <property type="entry name" value="AF_0924"/>
</dbReference>
<dbReference type="Pfam" id="PF22185">
    <property type="entry name" value="AF_0924"/>
    <property type="match status" value="1"/>
</dbReference>
<accession>O29338</accession>
<proteinExistence type="evidence at protein level"/>